<evidence type="ECO:0000255" key="1">
    <source>
        <dbReference type="HAMAP-Rule" id="MF_00141"/>
    </source>
</evidence>
<proteinExistence type="inferred from homology"/>
<keyword id="KW-0963">Cytoplasm</keyword>
<keyword id="KW-0251">Elongation factor</keyword>
<keyword id="KW-0648">Protein biosynthesis</keyword>
<keyword id="KW-1185">Reference proteome</keyword>
<name>EFP_PHEZH</name>
<comment type="function">
    <text evidence="1">Involved in peptide bond synthesis. Stimulates efficient translation and peptide-bond synthesis on native or reconstituted 70S ribosomes in vitro. Probably functions indirectly by altering the affinity of the ribosome for aminoacyl-tRNA, thus increasing their reactivity as acceptors for peptidyl transferase.</text>
</comment>
<comment type="pathway">
    <text evidence="1">Protein biosynthesis; polypeptide chain elongation.</text>
</comment>
<comment type="subcellular location">
    <subcellularLocation>
        <location evidence="1">Cytoplasm</location>
    </subcellularLocation>
</comment>
<comment type="similarity">
    <text evidence="1">Belongs to the elongation factor P family.</text>
</comment>
<feature type="chain" id="PRO_1000096186" description="Elongation factor P">
    <location>
        <begin position="1"/>
        <end position="188"/>
    </location>
</feature>
<sequence>MKVSASSLRKGNVVDLDGKLYVVLSAQNIHPGKGTPVTQLDMRRISDGVKVSERYRTTETVERATVDDRDYTFLYEDGEGFHFMNPESYEQVTASAEMIGDAKYYLTDGCTVKLSTHEGVPIAIELPRLATFEVVDTEPTVKGQTASSSYKPAVLSNGLRTMIPPYITVGTKIVVLTEDGSYQERAKD</sequence>
<organism>
    <name type="scientific">Phenylobacterium zucineum (strain HLK1)</name>
    <dbReference type="NCBI Taxonomy" id="450851"/>
    <lineage>
        <taxon>Bacteria</taxon>
        <taxon>Pseudomonadati</taxon>
        <taxon>Pseudomonadota</taxon>
        <taxon>Alphaproteobacteria</taxon>
        <taxon>Caulobacterales</taxon>
        <taxon>Caulobacteraceae</taxon>
        <taxon>Phenylobacterium</taxon>
    </lineage>
</organism>
<protein>
    <recommendedName>
        <fullName evidence="1">Elongation factor P</fullName>
        <shortName evidence="1">EF-P</shortName>
    </recommendedName>
</protein>
<dbReference type="EMBL" id="CP000747">
    <property type="protein sequence ID" value="ACG79080.1"/>
    <property type="molecule type" value="Genomic_DNA"/>
</dbReference>
<dbReference type="RefSeq" id="WP_012523218.1">
    <property type="nucleotide sequence ID" value="NC_011144.1"/>
</dbReference>
<dbReference type="SMR" id="B4RHN9"/>
<dbReference type="STRING" id="450851.PHZ_c2671"/>
<dbReference type="KEGG" id="pzu:PHZ_c2671"/>
<dbReference type="eggNOG" id="COG0231">
    <property type="taxonomic scope" value="Bacteria"/>
</dbReference>
<dbReference type="HOGENOM" id="CLU_074944_1_1_5"/>
<dbReference type="OrthoDB" id="9801844at2"/>
<dbReference type="UniPathway" id="UPA00345"/>
<dbReference type="Proteomes" id="UP000001868">
    <property type="component" value="Chromosome"/>
</dbReference>
<dbReference type="GO" id="GO:0005737">
    <property type="term" value="C:cytoplasm"/>
    <property type="evidence" value="ECO:0007669"/>
    <property type="project" value="UniProtKB-SubCell"/>
</dbReference>
<dbReference type="GO" id="GO:0003746">
    <property type="term" value="F:translation elongation factor activity"/>
    <property type="evidence" value="ECO:0007669"/>
    <property type="project" value="UniProtKB-UniRule"/>
</dbReference>
<dbReference type="GO" id="GO:0043043">
    <property type="term" value="P:peptide biosynthetic process"/>
    <property type="evidence" value="ECO:0007669"/>
    <property type="project" value="InterPro"/>
</dbReference>
<dbReference type="CDD" id="cd04470">
    <property type="entry name" value="S1_EF-P_repeat_1"/>
    <property type="match status" value="1"/>
</dbReference>
<dbReference type="FunFam" id="2.40.50.140:FF:000004">
    <property type="entry name" value="Elongation factor P"/>
    <property type="match status" value="1"/>
</dbReference>
<dbReference type="FunFam" id="2.40.50.140:FF:000009">
    <property type="entry name" value="Elongation factor P"/>
    <property type="match status" value="1"/>
</dbReference>
<dbReference type="Gene3D" id="2.30.30.30">
    <property type="match status" value="1"/>
</dbReference>
<dbReference type="Gene3D" id="2.40.50.140">
    <property type="entry name" value="Nucleic acid-binding proteins"/>
    <property type="match status" value="2"/>
</dbReference>
<dbReference type="HAMAP" id="MF_00141">
    <property type="entry name" value="EF_P"/>
    <property type="match status" value="1"/>
</dbReference>
<dbReference type="InterPro" id="IPR015365">
    <property type="entry name" value="Elong-fact-P_C"/>
</dbReference>
<dbReference type="InterPro" id="IPR012340">
    <property type="entry name" value="NA-bd_OB-fold"/>
</dbReference>
<dbReference type="InterPro" id="IPR014722">
    <property type="entry name" value="Rib_uL2_dom2"/>
</dbReference>
<dbReference type="InterPro" id="IPR020599">
    <property type="entry name" value="Transl_elong_fac_P/YeiP"/>
</dbReference>
<dbReference type="InterPro" id="IPR013185">
    <property type="entry name" value="Transl_elong_KOW-like"/>
</dbReference>
<dbReference type="InterPro" id="IPR001059">
    <property type="entry name" value="Transl_elong_P/YeiP_cen"/>
</dbReference>
<dbReference type="InterPro" id="IPR011768">
    <property type="entry name" value="Transl_elongation_fac_P"/>
</dbReference>
<dbReference type="InterPro" id="IPR008991">
    <property type="entry name" value="Translation_prot_SH3-like_sf"/>
</dbReference>
<dbReference type="NCBIfam" id="TIGR00038">
    <property type="entry name" value="efp"/>
    <property type="match status" value="1"/>
</dbReference>
<dbReference type="NCBIfam" id="NF001810">
    <property type="entry name" value="PRK00529.1"/>
    <property type="match status" value="1"/>
</dbReference>
<dbReference type="PANTHER" id="PTHR30053">
    <property type="entry name" value="ELONGATION FACTOR P"/>
    <property type="match status" value="1"/>
</dbReference>
<dbReference type="PANTHER" id="PTHR30053:SF14">
    <property type="entry name" value="TRANSLATION ELONGATION FACTOR KOW-LIKE DOMAIN-CONTAINING PROTEIN"/>
    <property type="match status" value="1"/>
</dbReference>
<dbReference type="Pfam" id="PF01132">
    <property type="entry name" value="EFP"/>
    <property type="match status" value="1"/>
</dbReference>
<dbReference type="Pfam" id="PF08207">
    <property type="entry name" value="EFP_N"/>
    <property type="match status" value="1"/>
</dbReference>
<dbReference type="Pfam" id="PF09285">
    <property type="entry name" value="Elong-fact-P_C"/>
    <property type="match status" value="1"/>
</dbReference>
<dbReference type="PIRSF" id="PIRSF005901">
    <property type="entry name" value="EF-P"/>
    <property type="match status" value="1"/>
</dbReference>
<dbReference type="SMART" id="SM01185">
    <property type="entry name" value="EFP"/>
    <property type="match status" value="1"/>
</dbReference>
<dbReference type="SMART" id="SM00841">
    <property type="entry name" value="Elong-fact-P_C"/>
    <property type="match status" value="1"/>
</dbReference>
<dbReference type="SUPFAM" id="SSF50249">
    <property type="entry name" value="Nucleic acid-binding proteins"/>
    <property type="match status" value="2"/>
</dbReference>
<dbReference type="SUPFAM" id="SSF50104">
    <property type="entry name" value="Translation proteins SH3-like domain"/>
    <property type="match status" value="1"/>
</dbReference>
<gene>
    <name evidence="1" type="primary">efp</name>
    <name type="ordered locus">PHZ_c2671</name>
</gene>
<accession>B4RHN9</accession>
<reference key="1">
    <citation type="journal article" date="2008" name="BMC Genomics">
        <title>Complete genome of Phenylobacterium zucineum - a novel facultative intracellular bacterium isolated from human erythroleukemia cell line K562.</title>
        <authorList>
            <person name="Luo Y."/>
            <person name="Xu X."/>
            <person name="Ding Z."/>
            <person name="Liu Z."/>
            <person name="Zhang B."/>
            <person name="Yan Z."/>
            <person name="Sun J."/>
            <person name="Hu S."/>
            <person name="Hu X."/>
        </authorList>
    </citation>
    <scope>NUCLEOTIDE SEQUENCE [LARGE SCALE GENOMIC DNA]</scope>
    <source>
        <strain>HLK1</strain>
    </source>
</reference>